<protein>
    <recommendedName>
        <fullName evidence="1">Elongation factor Ts</fullName>
        <shortName evidence="1">EF-Ts</shortName>
    </recommendedName>
</protein>
<organism>
    <name type="scientific">Staphylococcus haemolyticus (strain JCSC1435)</name>
    <dbReference type="NCBI Taxonomy" id="279808"/>
    <lineage>
        <taxon>Bacteria</taxon>
        <taxon>Bacillati</taxon>
        <taxon>Bacillota</taxon>
        <taxon>Bacilli</taxon>
        <taxon>Bacillales</taxon>
        <taxon>Staphylococcaceae</taxon>
        <taxon>Staphylococcus</taxon>
    </lineage>
</organism>
<gene>
    <name evidence="1" type="primary">tsf</name>
    <name type="ordered locus">SH1657</name>
</gene>
<dbReference type="EMBL" id="AP006716">
    <property type="protein sequence ID" value="BAE04966.1"/>
    <property type="molecule type" value="Genomic_DNA"/>
</dbReference>
<dbReference type="RefSeq" id="WP_011275943.1">
    <property type="nucleotide sequence ID" value="NC_007168.1"/>
</dbReference>
<dbReference type="SMR" id="Q4L5V9"/>
<dbReference type="GeneID" id="93781035"/>
<dbReference type="KEGG" id="sha:SH1657"/>
<dbReference type="eggNOG" id="COG0264">
    <property type="taxonomic scope" value="Bacteria"/>
</dbReference>
<dbReference type="HOGENOM" id="CLU_047155_0_2_9"/>
<dbReference type="OrthoDB" id="9808348at2"/>
<dbReference type="Proteomes" id="UP000000543">
    <property type="component" value="Chromosome"/>
</dbReference>
<dbReference type="GO" id="GO:0005737">
    <property type="term" value="C:cytoplasm"/>
    <property type="evidence" value="ECO:0007669"/>
    <property type="project" value="UniProtKB-SubCell"/>
</dbReference>
<dbReference type="GO" id="GO:0003746">
    <property type="term" value="F:translation elongation factor activity"/>
    <property type="evidence" value="ECO:0007669"/>
    <property type="project" value="UniProtKB-UniRule"/>
</dbReference>
<dbReference type="CDD" id="cd14275">
    <property type="entry name" value="UBA_EF-Ts"/>
    <property type="match status" value="1"/>
</dbReference>
<dbReference type="FunFam" id="1.10.286.20:FF:000003">
    <property type="entry name" value="Elongation factor Ts"/>
    <property type="match status" value="1"/>
</dbReference>
<dbReference type="FunFam" id="1.10.8.10:FF:000001">
    <property type="entry name" value="Elongation factor Ts"/>
    <property type="match status" value="1"/>
</dbReference>
<dbReference type="Gene3D" id="1.10.286.20">
    <property type="match status" value="1"/>
</dbReference>
<dbReference type="Gene3D" id="1.10.8.10">
    <property type="entry name" value="DNA helicase RuvA subunit, C-terminal domain"/>
    <property type="match status" value="1"/>
</dbReference>
<dbReference type="Gene3D" id="3.30.479.20">
    <property type="entry name" value="Elongation factor Ts, dimerisation domain"/>
    <property type="match status" value="2"/>
</dbReference>
<dbReference type="HAMAP" id="MF_00050">
    <property type="entry name" value="EF_Ts"/>
    <property type="match status" value="1"/>
</dbReference>
<dbReference type="InterPro" id="IPR036402">
    <property type="entry name" value="EF-Ts_dimer_sf"/>
</dbReference>
<dbReference type="InterPro" id="IPR001816">
    <property type="entry name" value="Transl_elong_EFTs/EF1B"/>
</dbReference>
<dbReference type="InterPro" id="IPR014039">
    <property type="entry name" value="Transl_elong_EFTs/EF1B_dimer"/>
</dbReference>
<dbReference type="InterPro" id="IPR018101">
    <property type="entry name" value="Transl_elong_Ts_CS"/>
</dbReference>
<dbReference type="InterPro" id="IPR009060">
    <property type="entry name" value="UBA-like_sf"/>
</dbReference>
<dbReference type="NCBIfam" id="TIGR00116">
    <property type="entry name" value="tsf"/>
    <property type="match status" value="1"/>
</dbReference>
<dbReference type="PANTHER" id="PTHR11741">
    <property type="entry name" value="ELONGATION FACTOR TS"/>
    <property type="match status" value="1"/>
</dbReference>
<dbReference type="PANTHER" id="PTHR11741:SF0">
    <property type="entry name" value="ELONGATION FACTOR TS, MITOCHONDRIAL"/>
    <property type="match status" value="1"/>
</dbReference>
<dbReference type="Pfam" id="PF00889">
    <property type="entry name" value="EF_TS"/>
    <property type="match status" value="1"/>
</dbReference>
<dbReference type="SUPFAM" id="SSF54713">
    <property type="entry name" value="Elongation factor Ts (EF-Ts), dimerisation domain"/>
    <property type="match status" value="2"/>
</dbReference>
<dbReference type="SUPFAM" id="SSF46934">
    <property type="entry name" value="UBA-like"/>
    <property type="match status" value="1"/>
</dbReference>
<dbReference type="PROSITE" id="PS01126">
    <property type="entry name" value="EF_TS_1"/>
    <property type="match status" value="1"/>
</dbReference>
<dbReference type="PROSITE" id="PS01127">
    <property type="entry name" value="EF_TS_2"/>
    <property type="match status" value="1"/>
</dbReference>
<comment type="function">
    <text evidence="1">Associates with the EF-Tu.GDP complex and induces the exchange of GDP to GTP. It remains bound to the aminoacyl-tRNA.EF-Tu.GTP complex up to the GTP hydrolysis stage on the ribosome.</text>
</comment>
<comment type="subcellular location">
    <subcellularLocation>
        <location evidence="1">Cytoplasm</location>
    </subcellularLocation>
</comment>
<comment type="similarity">
    <text evidence="1">Belongs to the EF-Ts family.</text>
</comment>
<accession>Q4L5V9</accession>
<evidence type="ECO:0000255" key="1">
    <source>
        <dbReference type="HAMAP-Rule" id="MF_00050"/>
    </source>
</evidence>
<keyword id="KW-0963">Cytoplasm</keyword>
<keyword id="KW-0251">Elongation factor</keyword>
<keyword id="KW-0648">Protein biosynthesis</keyword>
<proteinExistence type="inferred from homology"/>
<feature type="chain" id="PRO_0000241533" description="Elongation factor Ts">
    <location>
        <begin position="1"/>
        <end position="292"/>
    </location>
</feature>
<feature type="region of interest" description="Involved in Mg(2+) ion dislocation from EF-Tu" evidence="1">
    <location>
        <begin position="79"/>
        <end position="82"/>
    </location>
</feature>
<sequence length="292" mass="32467">MAISAKLVKELRERTGAGMMDCKKALTETDGDIDKAIDYLREKGIAKAAKKADRIAAEGLVHVEVKGNEAAIVEINSETDFVARNEGFQELVKEIANQVLDSKAETVDALLETKLSSGKTVDERMKEAISTIGEKLSIRRFEIRTKSDNDAFGAYLHMGGRIGVLTVVEGSTDEEAAKDVAMHIAAINPKYVSSEQVKEEEINHEREVLKQQALNEGKPENIVEKMVEGRLRKYLQEICAVDQNFVKDPDQTVEAFLKSKGGKLVDFVRYEVGEGMEKREENFADEVKGQMK</sequence>
<reference key="1">
    <citation type="journal article" date="2005" name="J. Bacteriol.">
        <title>Whole-genome sequencing of Staphylococcus haemolyticus uncovers the extreme plasticity of its genome and the evolution of human-colonizing staphylococcal species.</title>
        <authorList>
            <person name="Takeuchi F."/>
            <person name="Watanabe S."/>
            <person name="Baba T."/>
            <person name="Yuzawa H."/>
            <person name="Ito T."/>
            <person name="Morimoto Y."/>
            <person name="Kuroda M."/>
            <person name="Cui L."/>
            <person name="Takahashi M."/>
            <person name="Ankai A."/>
            <person name="Baba S."/>
            <person name="Fukui S."/>
            <person name="Lee J.C."/>
            <person name="Hiramatsu K."/>
        </authorList>
    </citation>
    <scope>NUCLEOTIDE SEQUENCE [LARGE SCALE GENOMIC DNA]</scope>
    <source>
        <strain>JCSC1435</strain>
    </source>
</reference>
<name>EFTS_STAHJ</name>